<name>NTDP_STAAB</name>
<sequence length="180" mass="21704">MVRESIPKEGENIKIQSYKHDGKIHRVWSETTILKGTDHVVIGGNDHTLVTESDGRTWITREPAIVYFHSEYWFNVICMFREDGIYYYCNLSSPFVCDEEALKYIDYDLDIKVYPNGKYHLLDEDEYEQHMNQMNYPHDIDIILRRNVDILQQWIEQKKGPFAPDFIKVWKERYKKIRQY</sequence>
<proteinExistence type="inferred from homology"/>
<feature type="chain" id="PRO_0000248106" description="Nucleoside triphosphate/diphosphate phosphatase">
    <location>
        <begin position="1"/>
        <end position="180"/>
    </location>
</feature>
<feature type="active site" description="Proton donor" evidence="1">
    <location>
        <position position="26"/>
    </location>
</feature>
<feature type="binding site" evidence="1">
    <location>
        <position position="90"/>
    </location>
    <ligand>
        <name>Mg(2+)</name>
        <dbReference type="ChEBI" id="CHEBI:18420"/>
        <label>1</label>
    </ligand>
</feature>
<feature type="binding site" evidence="1">
    <location>
        <position position="106"/>
    </location>
    <ligand>
        <name>Mg(2+)</name>
        <dbReference type="ChEBI" id="CHEBI:18420"/>
        <label>1</label>
    </ligand>
</feature>
<feature type="binding site" evidence="1">
    <location>
        <position position="108"/>
    </location>
    <ligand>
        <name>Mg(2+)</name>
        <dbReference type="ChEBI" id="CHEBI:18420"/>
        <label>2</label>
    </ligand>
</feature>
<feature type="binding site" evidence="1">
    <location>
        <position position="110"/>
    </location>
    <ligand>
        <name>Mg(2+)</name>
        <dbReference type="ChEBI" id="CHEBI:18420"/>
        <label>1</label>
    </ligand>
</feature>
<feature type="binding site" evidence="1">
    <location>
        <position position="110"/>
    </location>
    <ligand>
        <name>Mg(2+)</name>
        <dbReference type="ChEBI" id="CHEBI:18420"/>
        <label>2</label>
    </ligand>
</feature>
<feature type="binding site" evidence="1">
    <location>
        <position position="123"/>
    </location>
    <ligand>
        <name>Mg(2+)</name>
        <dbReference type="ChEBI" id="CHEBI:18420"/>
        <label>2</label>
    </ligand>
</feature>
<feature type="binding site" evidence="1">
    <location>
        <position position="126"/>
    </location>
    <ligand>
        <name>Mg(2+)</name>
        <dbReference type="ChEBI" id="CHEBI:18420"/>
        <label>2</label>
    </ligand>
</feature>
<dbReference type="EC" id="3.6.1.15" evidence="1"/>
<dbReference type="EC" id="3.6.1.6" evidence="1"/>
<dbReference type="EMBL" id="AJ938182">
    <property type="protein sequence ID" value="CAI81489.1"/>
    <property type="molecule type" value="Genomic_DNA"/>
</dbReference>
<dbReference type="RefSeq" id="WP_000251253.1">
    <property type="nucleotide sequence ID" value="NC_007622.1"/>
</dbReference>
<dbReference type="SMR" id="Q2YU19"/>
<dbReference type="KEGG" id="sab:SAB1800c"/>
<dbReference type="HOGENOM" id="CLU_109787_1_0_9"/>
<dbReference type="GO" id="GO:0000287">
    <property type="term" value="F:magnesium ion binding"/>
    <property type="evidence" value="ECO:0007669"/>
    <property type="project" value="UniProtKB-UniRule"/>
</dbReference>
<dbReference type="GO" id="GO:0017110">
    <property type="term" value="F:nucleoside diphosphate phosphatase activity"/>
    <property type="evidence" value="ECO:0007669"/>
    <property type="project" value="UniProtKB-UniRule"/>
</dbReference>
<dbReference type="GO" id="GO:0017111">
    <property type="term" value="F:ribonucleoside triphosphate phosphatase activity"/>
    <property type="evidence" value="ECO:0007669"/>
    <property type="project" value="UniProtKB-UniRule"/>
</dbReference>
<dbReference type="Gene3D" id="2.40.380.10">
    <property type="entry name" value="FomD-like"/>
    <property type="match status" value="1"/>
</dbReference>
<dbReference type="HAMAP" id="MF_01568">
    <property type="entry name" value="Ntdp"/>
    <property type="match status" value="1"/>
</dbReference>
<dbReference type="InterPro" id="IPR007295">
    <property type="entry name" value="DUF402"/>
</dbReference>
<dbReference type="InterPro" id="IPR035930">
    <property type="entry name" value="FomD-like_sf"/>
</dbReference>
<dbReference type="InterPro" id="IPR050212">
    <property type="entry name" value="Ntdp-like"/>
</dbReference>
<dbReference type="InterPro" id="IPR016882">
    <property type="entry name" value="SA1684"/>
</dbReference>
<dbReference type="NCBIfam" id="NF010183">
    <property type="entry name" value="PRK13662.1"/>
    <property type="match status" value="1"/>
</dbReference>
<dbReference type="PANTHER" id="PTHR39159">
    <property type="match status" value="1"/>
</dbReference>
<dbReference type="PANTHER" id="PTHR39159:SF1">
    <property type="entry name" value="UPF0374 PROTEIN YGAC"/>
    <property type="match status" value="1"/>
</dbReference>
<dbReference type="Pfam" id="PF04167">
    <property type="entry name" value="DUF402"/>
    <property type="match status" value="1"/>
</dbReference>
<dbReference type="PIRSF" id="PIRSF028345">
    <property type="entry name" value="UCP028345"/>
    <property type="match status" value="1"/>
</dbReference>
<dbReference type="SUPFAM" id="SSF159234">
    <property type="entry name" value="FomD-like"/>
    <property type="match status" value="1"/>
</dbReference>
<evidence type="ECO:0000255" key="1">
    <source>
        <dbReference type="HAMAP-Rule" id="MF_01568"/>
    </source>
</evidence>
<comment type="function">
    <text evidence="1">Has nucleoside phosphatase activity towards nucleoside triphosphates and nucleoside diphosphates.</text>
</comment>
<comment type="catalytic activity">
    <reaction evidence="1">
        <text>a ribonucleoside 5'-triphosphate + H2O = a ribonucleoside 5'-diphosphate + phosphate + H(+)</text>
        <dbReference type="Rhea" id="RHEA:23680"/>
        <dbReference type="ChEBI" id="CHEBI:15377"/>
        <dbReference type="ChEBI" id="CHEBI:15378"/>
        <dbReference type="ChEBI" id="CHEBI:43474"/>
        <dbReference type="ChEBI" id="CHEBI:57930"/>
        <dbReference type="ChEBI" id="CHEBI:61557"/>
        <dbReference type="EC" id="3.6.1.15"/>
    </reaction>
</comment>
<comment type="catalytic activity">
    <reaction evidence="1">
        <text>a ribonucleoside 5'-diphosphate + H2O = a ribonucleoside 5'-phosphate + phosphate + H(+)</text>
        <dbReference type="Rhea" id="RHEA:36799"/>
        <dbReference type="ChEBI" id="CHEBI:15377"/>
        <dbReference type="ChEBI" id="CHEBI:15378"/>
        <dbReference type="ChEBI" id="CHEBI:43474"/>
        <dbReference type="ChEBI" id="CHEBI:57930"/>
        <dbReference type="ChEBI" id="CHEBI:58043"/>
        <dbReference type="EC" id="3.6.1.6"/>
    </reaction>
</comment>
<comment type="cofactor">
    <cofactor evidence="1">
        <name>Mg(2+)</name>
        <dbReference type="ChEBI" id="CHEBI:18420"/>
    </cofactor>
</comment>
<comment type="similarity">
    <text evidence="1">Belongs to the Ntdp family.</text>
</comment>
<gene>
    <name type="ordered locus">SAB1800c</name>
</gene>
<reference key="1">
    <citation type="journal article" date="2007" name="PLoS ONE">
        <title>Molecular correlates of host specialization in Staphylococcus aureus.</title>
        <authorList>
            <person name="Herron-Olson L."/>
            <person name="Fitzgerald J.R."/>
            <person name="Musser J.M."/>
            <person name="Kapur V."/>
        </authorList>
    </citation>
    <scope>NUCLEOTIDE SEQUENCE [LARGE SCALE GENOMIC DNA]</scope>
    <source>
        <strain>bovine RF122 / ET3-1</strain>
    </source>
</reference>
<keyword id="KW-0378">Hydrolase</keyword>
<keyword id="KW-0460">Magnesium</keyword>
<keyword id="KW-0479">Metal-binding</keyword>
<accession>Q2YU19</accession>
<protein>
    <recommendedName>
        <fullName evidence="1">Nucleoside triphosphate/diphosphate phosphatase</fullName>
        <ecNumber evidence="1">3.6.1.15</ecNumber>
        <ecNumber evidence="1">3.6.1.6</ecNumber>
    </recommendedName>
</protein>
<organism>
    <name type="scientific">Staphylococcus aureus (strain bovine RF122 / ET3-1)</name>
    <dbReference type="NCBI Taxonomy" id="273036"/>
    <lineage>
        <taxon>Bacteria</taxon>
        <taxon>Bacillati</taxon>
        <taxon>Bacillota</taxon>
        <taxon>Bacilli</taxon>
        <taxon>Bacillales</taxon>
        <taxon>Staphylococcaceae</taxon>
        <taxon>Staphylococcus</taxon>
    </lineage>
</organism>